<accession>P0CQ00</accession>
<accession>Q55JQ8</accession>
<accession>Q5K9U4</accession>
<keyword id="KW-0963">Cytoplasm</keyword>
<keyword id="KW-0413">Isomerase</keyword>
<keyword id="KW-0539">Nucleus</keyword>
<keyword id="KW-1185">Reference proteome</keyword>
<keyword id="KW-0697">Rotamase</keyword>
<feature type="chain" id="PRO_0000226097" description="Serine/threonine-protein phosphatase 2A activator 1">
    <location>
        <begin position="1"/>
        <end position="362"/>
    </location>
</feature>
<feature type="region of interest" description="Disordered" evidence="2">
    <location>
        <begin position="1"/>
        <end position="28"/>
    </location>
</feature>
<feature type="region of interest" description="Disordered" evidence="2">
    <location>
        <begin position="339"/>
        <end position="362"/>
    </location>
</feature>
<feature type="compositionally biased region" description="Pro residues" evidence="2">
    <location>
        <begin position="1"/>
        <end position="10"/>
    </location>
</feature>
<feature type="compositionally biased region" description="Basic and acidic residues" evidence="2">
    <location>
        <begin position="340"/>
        <end position="351"/>
    </location>
</feature>
<reference key="1">
    <citation type="journal article" date="2005" name="Science">
        <title>The genome of the basidiomycetous yeast and human pathogen Cryptococcus neoformans.</title>
        <authorList>
            <person name="Loftus B.J."/>
            <person name="Fung E."/>
            <person name="Roncaglia P."/>
            <person name="Rowley D."/>
            <person name="Amedeo P."/>
            <person name="Bruno D."/>
            <person name="Vamathevan J."/>
            <person name="Miranda M."/>
            <person name="Anderson I.J."/>
            <person name="Fraser J.A."/>
            <person name="Allen J.E."/>
            <person name="Bosdet I.E."/>
            <person name="Brent M.R."/>
            <person name="Chiu R."/>
            <person name="Doering T.L."/>
            <person name="Donlin M.J."/>
            <person name="D'Souza C.A."/>
            <person name="Fox D.S."/>
            <person name="Grinberg V."/>
            <person name="Fu J."/>
            <person name="Fukushima M."/>
            <person name="Haas B.J."/>
            <person name="Huang J.C."/>
            <person name="Janbon G."/>
            <person name="Jones S.J.M."/>
            <person name="Koo H.L."/>
            <person name="Krzywinski M.I."/>
            <person name="Kwon-Chung K.J."/>
            <person name="Lengeler K.B."/>
            <person name="Maiti R."/>
            <person name="Marra M.A."/>
            <person name="Marra R.E."/>
            <person name="Mathewson C.A."/>
            <person name="Mitchell T.G."/>
            <person name="Pertea M."/>
            <person name="Riggs F.R."/>
            <person name="Salzberg S.L."/>
            <person name="Schein J.E."/>
            <person name="Shvartsbeyn A."/>
            <person name="Shin H."/>
            <person name="Shumway M."/>
            <person name="Specht C.A."/>
            <person name="Suh B.B."/>
            <person name="Tenney A."/>
            <person name="Utterback T.R."/>
            <person name="Wickes B.L."/>
            <person name="Wortman J.R."/>
            <person name="Wye N.H."/>
            <person name="Kronstad J.W."/>
            <person name="Lodge J.K."/>
            <person name="Heitman J."/>
            <person name="Davis R.W."/>
            <person name="Fraser C.M."/>
            <person name="Hyman R.W."/>
        </authorList>
    </citation>
    <scope>NUCLEOTIDE SEQUENCE [LARGE SCALE GENOMIC DNA]</scope>
    <source>
        <strain>JEC21 / ATCC MYA-565</strain>
    </source>
</reference>
<sequence length="362" mass="40468">MQPHTQPPQPEASSSRAVHIPSDPAPPRPCLTNDAIVSRWQSSPGFQYFWAWIKRRCDRLKGKEIIRGPFDHSAHGIRSLMNMLDQMTSWVEDATPQPQSNQRFGNLAFRTYNKLLQERLPPLIDSWDIPSNLRSQLLPLFINSHAFGHPTRLDYGTGHELAFVLGLWCCVVPGWVGGDNGTEEEEDELILRVFTRYLELTTFLQKTYNLEPAGSHGVWGLDDYCFLPYLFGSAQLLGSNLTPSASLSLALSHHPSATSPPSAPITDLYTLSLHHLTLFKFGASFSEHSPLLYSLSQMPNWVKPHGGLKKMFLGEVVGKRVVVQGIWVGGWCWGEDVPNVEERGDKNEGKGTDAGTKAPWAR</sequence>
<gene>
    <name type="primary">RRD1</name>
    <name type="ordered locus">CNK00750</name>
</gene>
<organism>
    <name type="scientific">Cryptococcus neoformans var. neoformans serotype D (strain JEC21 / ATCC MYA-565)</name>
    <name type="common">Filobasidiella neoformans</name>
    <dbReference type="NCBI Taxonomy" id="214684"/>
    <lineage>
        <taxon>Eukaryota</taxon>
        <taxon>Fungi</taxon>
        <taxon>Dikarya</taxon>
        <taxon>Basidiomycota</taxon>
        <taxon>Agaricomycotina</taxon>
        <taxon>Tremellomycetes</taxon>
        <taxon>Tremellales</taxon>
        <taxon>Cryptococcaceae</taxon>
        <taxon>Cryptococcus</taxon>
        <taxon>Cryptococcus neoformans species complex</taxon>
    </lineage>
</organism>
<protein>
    <recommendedName>
        <fullName>Serine/threonine-protein phosphatase 2A activator 1</fullName>
        <ecNumber>5.2.1.8</ecNumber>
    </recommendedName>
    <alternativeName>
        <fullName>Peptidyl-prolyl cis-trans isomerase PTPA-1</fullName>
        <shortName>PPIase PTPA-1</shortName>
        <shortName>Rotamase PTPA-1</shortName>
    </alternativeName>
    <alternativeName>
        <fullName>Phosphotyrosyl phosphatase activator 1</fullName>
    </alternativeName>
</protein>
<proteinExistence type="inferred from homology"/>
<evidence type="ECO:0000250" key="1"/>
<evidence type="ECO:0000256" key="2">
    <source>
        <dbReference type="SAM" id="MobiDB-lite"/>
    </source>
</evidence>
<evidence type="ECO:0000305" key="3"/>
<dbReference type="EC" id="5.2.1.8"/>
<dbReference type="EMBL" id="AE017351">
    <property type="protein sequence ID" value="AAW46120.1"/>
    <property type="molecule type" value="Genomic_DNA"/>
</dbReference>
<dbReference type="RefSeq" id="XP_567637.1">
    <property type="nucleotide sequence ID" value="XM_567637.1"/>
</dbReference>
<dbReference type="SMR" id="P0CQ00"/>
<dbReference type="STRING" id="214684.P0CQ00"/>
<dbReference type="PaxDb" id="214684-P0CQ00"/>
<dbReference type="EnsemblFungi" id="AAW46120">
    <property type="protein sequence ID" value="AAW46120"/>
    <property type="gene ID" value="CNK00750"/>
</dbReference>
<dbReference type="GeneID" id="3254580"/>
<dbReference type="KEGG" id="cne:CNK00750"/>
<dbReference type="VEuPathDB" id="FungiDB:CNK00750"/>
<dbReference type="eggNOG" id="KOG2867">
    <property type="taxonomic scope" value="Eukaryota"/>
</dbReference>
<dbReference type="HOGENOM" id="CLU_030733_1_0_1"/>
<dbReference type="InParanoid" id="P0CQ00"/>
<dbReference type="OMA" id="DACHISP"/>
<dbReference type="OrthoDB" id="16120at2759"/>
<dbReference type="Proteomes" id="UP000002149">
    <property type="component" value="Chromosome 11"/>
</dbReference>
<dbReference type="GO" id="GO:0005737">
    <property type="term" value="C:cytoplasm"/>
    <property type="evidence" value="ECO:0000318"/>
    <property type="project" value="GO_Central"/>
</dbReference>
<dbReference type="GO" id="GO:0005634">
    <property type="term" value="C:nucleus"/>
    <property type="evidence" value="ECO:0000318"/>
    <property type="project" value="GO_Central"/>
</dbReference>
<dbReference type="GO" id="GO:0000159">
    <property type="term" value="C:protein phosphatase type 2A complex"/>
    <property type="evidence" value="ECO:0000318"/>
    <property type="project" value="GO_Central"/>
</dbReference>
<dbReference type="GO" id="GO:0003755">
    <property type="term" value="F:peptidyl-prolyl cis-trans isomerase activity"/>
    <property type="evidence" value="ECO:0000318"/>
    <property type="project" value="GO_Central"/>
</dbReference>
<dbReference type="GO" id="GO:0008160">
    <property type="term" value="F:protein tyrosine phosphatase activator activity"/>
    <property type="evidence" value="ECO:0000318"/>
    <property type="project" value="GO_Central"/>
</dbReference>
<dbReference type="GO" id="GO:0007052">
    <property type="term" value="P:mitotic spindle organization"/>
    <property type="evidence" value="ECO:0000318"/>
    <property type="project" value="GO_Central"/>
</dbReference>
<dbReference type="CDD" id="cd04087">
    <property type="entry name" value="PTPA"/>
    <property type="match status" value="1"/>
</dbReference>
<dbReference type="Gene3D" id="1.20.120.1150">
    <property type="match status" value="1"/>
</dbReference>
<dbReference type="InterPro" id="IPR004327">
    <property type="entry name" value="Phstyr_phstse_ac"/>
</dbReference>
<dbReference type="InterPro" id="IPR043170">
    <property type="entry name" value="PTPA_C_lid"/>
</dbReference>
<dbReference type="InterPro" id="IPR037218">
    <property type="entry name" value="PTPA_sf"/>
</dbReference>
<dbReference type="PANTHER" id="PTHR10012">
    <property type="entry name" value="SERINE/THREONINE-PROTEIN PHOSPHATASE 2A REGULATORY SUBUNIT B"/>
    <property type="match status" value="1"/>
</dbReference>
<dbReference type="PANTHER" id="PTHR10012:SF5">
    <property type="entry name" value="SERINE_THREONINE-PROTEIN PHOSPHATASE 2A ACTIVATOR 2"/>
    <property type="match status" value="1"/>
</dbReference>
<dbReference type="Pfam" id="PF03095">
    <property type="entry name" value="PTPA"/>
    <property type="match status" value="1"/>
</dbReference>
<dbReference type="PIRSF" id="PIRSF016325">
    <property type="entry name" value="Phstyr_phstse_ac"/>
    <property type="match status" value="1"/>
</dbReference>
<dbReference type="SUPFAM" id="SSF140984">
    <property type="entry name" value="PTPA-like"/>
    <property type="match status" value="1"/>
</dbReference>
<comment type="function">
    <text evidence="1">PPIases accelerate the folding of proteins. It catalyzes the cis-trans isomerization of proline imidic peptide bonds in oligopeptides. Acts as a regulatory subunit for PP2A-like phosphatases modulating their activity or substrate specificity, probably by inducing a conformational change in the catalytic subunit, a direct target of the PPIase. Can reactivate inactive phosphatase PP2A-phosphatase methylesterase complexes (PP2Ai) in presence of ATP and Mg(2+) by dissociating the inactive form from the complex (By similarity).</text>
</comment>
<comment type="catalytic activity">
    <reaction>
        <text>[protein]-peptidylproline (omega=180) = [protein]-peptidylproline (omega=0)</text>
        <dbReference type="Rhea" id="RHEA:16237"/>
        <dbReference type="Rhea" id="RHEA-COMP:10747"/>
        <dbReference type="Rhea" id="RHEA-COMP:10748"/>
        <dbReference type="ChEBI" id="CHEBI:83833"/>
        <dbReference type="ChEBI" id="CHEBI:83834"/>
        <dbReference type="EC" id="5.2.1.8"/>
    </reaction>
</comment>
<comment type="subcellular location">
    <subcellularLocation>
        <location evidence="1">Cytoplasm</location>
    </subcellularLocation>
    <subcellularLocation>
        <location evidence="1">Nucleus</location>
    </subcellularLocation>
</comment>
<comment type="similarity">
    <text evidence="3">Belongs to the PTPA-type PPIase family.</text>
</comment>
<name>PTPA1_CRYNJ</name>